<gene>
    <name evidence="1" type="primary">hspQ</name>
    <name type="ordered locus">SeSA_A1142</name>
</gene>
<evidence type="ECO:0000255" key="1">
    <source>
        <dbReference type="HAMAP-Rule" id="MF_01194"/>
    </source>
</evidence>
<evidence type="ECO:0000256" key="2">
    <source>
        <dbReference type="SAM" id="MobiDB-lite"/>
    </source>
</evidence>
<sequence length="105" mass="11996">MIASKFGIGQQVRHSLLGYLGVVVDIDPEYSLDEPSPDELAVNDELRAAPWYHVVMEDDDGQPVHTYLAEAQLRSEMRDEHPEQPSMDELARTIRKQLQAPRLRN</sequence>
<name>HSPQ_SALSV</name>
<keyword id="KW-0963">Cytoplasm</keyword>
<keyword id="KW-0346">Stress response</keyword>
<dbReference type="EMBL" id="CP001127">
    <property type="protein sequence ID" value="ACF92200.1"/>
    <property type="molecule type" value="Genomic_DNA"/>
</dbReference>
<dbReference type="RefSeq" id="WP_000561983.1">
    <property type="nucleotide sequence ID" value="NC_011094.1"/>
</dbReference>
<dbReference type="SMR" id="B4TSJ1"/>
<dbReference type="GeneID" id="66755429"/>
<dbReference type="KEGG" id="sew:SeSA_A1142"/>
<dbReference type="HOGENOM" id="CLU_123865_1_0_6"/>
<dbReference type="Proteomes" id="UP000001865">
    <property type="component" value="Chromosome"/>
</dbReference>
<dbReference type="GO" id="GO:0005737">
    <property type="term" value="C:cytoplasm"/>
    <property type="evidence" value="ECO:0007669"/>
    <property type="project" value="UniProtKB-SubCell"/>
</dbReference>
<dbReference type="GO" id="GO:0003677">
    <property type="term" value="F:DNA binding"/>
    <property type="evidence" value="ECO:0007669"/>
    <property type="project" value="InterPro"/>
</dbReference>
<dbReference type="GO" id="GO:0009408">
    <property type="term" value="P:response to heat"/>
    <property type="evidence" value="ECO:0007669"/>
    <property type="project" value="UniProtKB-UniRule"/>
</dbReference>
<dbReference type="Gene3D" id="2.30.30.390">
    <property type="entry name" value="Hemimethylated DNA-binding domain"/>
    <property type="match status" value="1"/>
</dbReference>
<dbReference type="HAMAP" id="MF_01194">
    <property type="entry name" value="HspQ"/>
    <property type="match status" value="1"/>
</dbReference>
<dbReference type="InterPro" id="IPR011722">
    <property type="entry name" value="Hemimethylated_DNA-bd_dom"/>
</dbReference>
<dbReference type="InterPro" id="IPR036623">
    <property type="entry name" value="Hemimethylated_DNA-bd_sf"/>
</dbReference>
<dbReference type="InterPro" id="IPR022866">
    <property type="entry name" value="HspQ"/>
</dbReference>
<dbReference type="NCBIfam" id="NF010729">
    <property type="entry name" value="PRK14129.1"/>
    <property type="match status" value="1"/>
</dbReference>
<dbReference type="NCBIfam" id="TIGR02097">
    <property type="entry name" value="yccV"/>
    <property type="match status" value="1"/>
</dbReference>
<dbReference type="Pfam" id="PF08755">
    <property type="entry name" value="YccV-like"/>
    <property type="match status" value="1"/>
</dbReference>
<dbReference type="SMART" id="SM00992">
    <property type="entry name" value="YccV-like"/>
    <property type="match status" value="1"/>
</dbReference>
<dbReference type="SUPFAM" id="SSF141255">
    <property type="entry name" value="YccV-like"/>
    <property type="match status" value="1"/>
</dbReference>
<feature type="chain" id="PRO_1000138420" description="Heat shock protein HspQ">
    <location>
        <begin position="1"/>
        <end position="105"/>
    </location>
</feature>
<feature type="region of interest" description="Disordered" evidence="2">
    <location>
        <begin position="76"/>
        <end position="105"/>
    </location>
</feature>
<proteinExistence type="inferred from homology"/>
<accession>B4TSJ1</accession>
<organism>
    <name type="scientific">Salmonella schwarzengrund (strain CVM19633)</name>
    <dbReference type="NCBI Taxonomy" id="439843"/>
    <lineage>
        <taxon>Bacteria</taxon>
        <taxon>Pseudomonadati</taxon>
        <taxon>Pseudomonadota</taxon>
        <taxon>Gammaproteobacteria</taxon>
        <taxon>Enterobacterales</taxon>
        <taxon>Enterobacteriaceae</taxon>
        <taxon>Salmonella</taxon>
    </lineage>
</organism>
<comment type="function">
    <text evidence="1">Involved in the degradation of certain denaturated proteins, including DnaA, during heat shock stress.</text>
</comment>
<comment type="subcellular location">
    <subcellularLocation>
        <location evidence="1">Cytoplasm</location>
    </subcellularLocation>
</comment>
<comment type="similarity">
    <text evidence="1">Belongs to the HspQ family.</text>
</comment>
<protein>
    <recommendedName>
        <fullName evidence="1">Heat shock protein HspQ</fullName>
    </recommendedName>
</protein>
<reference key="1">
    <citation type="journal article" date="2011" name="J. Bacteriol.">
        <title>Comparative genomics of 28 Salmonella enterica isolates: evidence for CRISPR-mediated adaptive sublineage evolution.</title>
        <authorList>
            <person name="Fricke W.F."/>
            <person name="Mammel M.K."/>
            <person name="McDermott P.F."/>
            <person name="Tartera C."/>
            <person name="White D.G."/>
            <person name="Leclerc J.E."/>
            <person name="Ravel J."/>
            <person name="Cebula T.A."/>
        </authorList>
    </citation>
    <scope>NUCLEOTIDE SEQUENCE [LARGE SCALE GENOMIC DNA]</scope>
    <source>
        <strain>CVM19633</strain>
    </source>
</reference>